<dbReference type="EMBL" id="J04496">
    <property type="protein sequence ID" value="AAA48661.1"/>
    <property type="molecule type" value="mRNA"/>
</dbReference>
<dbReference type="PIR" id="A41428">
    <property type="entry name" value="A41428"/>
</dbReference>
<dbReference type="RefSeq" id="NP_001026734.1">
    <property type="nucleotide sequence ID" value="NM_001031563.1"/>
</dbReference>
<dbReference type="SMR" id="P19336"/>
<dbReference type="FunCoup" id="P19336">
    <property type="interactions" value="70"/>
</dbReference>
<dbReference type="STRING" id="9031.ENSGALP00000014090"/>
<dbReference type="PaxDb" id="9031-ENSGALP00000014090"/>
<dbReference type="Ensembl" id="ENSGALT00010049947.1">
    <property type="protein sequence ID" value="ENSGALP00010029502.1"/>
    <property type="gene ID" value="ENSGALG00010020677.1"/>
</dbReference>
<dbReference type="GeneID" id="429089"/>
<dbReference type="KEGG" id="gga:429089"/>
<dbReference type="CTD" id="429089"/>
<dbReference type="VEuPathDB" id="HostDB:geneid_429089"/>
<dbReference type="eggNOG" id="ENOG502QQQQ">
    <property type="taxonomic scope" value="Eukaryota"/>
</dbReference>
<dbReference type="GeneTree" id="ENSGT00940000155151"/>
<dbReference type="HOGENOM" id="CLU_063247_1_0_1"/>
<dbReference type="InParanoid" id="P19336"/>
<dbReference type="OMA" id="HCDDGET"/>
<dbReference type="OrthoDB" id="365605at2759"/>
<dbReference type="PhylomeDB" id="P19336"/>
<dbReference type="Reactome" id="R-GGA-381426">
    <property type="pathway name" value="Regulation of Insulin-like Growth Factor (IGF) transport and uptake by Insulin-like Growth Factor Binding Proteins (IGFBPs)"/>
</dbReference>
<dbReference type="Reactome" id="R-GGA-8957275">
    <property type="pathway name" value="Post-translational protein phosphorylation"/>
</dbReference>
<dbReference type="PRO" id="PR:P19336"/>
<dbReference type="Proteomes" id="UP000000539">
    <property type="component" value="Chromosome 8"/>
</dbReference>
<dbReference type="Bgee" id="ENSGALG00000008661">
    <property type="expression patterns" value="Expressed in spermatocyte and 13 other cell types or tissues"/>
</dbReference>
<dbReference type="GO" id="GO:0031012">
    <property type="term" value="C:extracellular matrix"/>
    <property type="evidence" value="ECO:0000318"/>
    <property type="project" value="GO_Central"/>
</dbReference>
<dbReference type="GO" id="GO:0005615">
    <property type="term" value="C:extracellular space"/>
    <property type="evidence" value="ECO:0000318"/>
    <property type="project" value="GO_Central"/>
</dbReference>
<dbReference type="GO" id="GO:0050840">
    <property type="term" value="F:extracellular matrix binding"/>
    <property type="evidence" value="ECO:0007669"/>
    <property type="project" value="Ensembl"/>
</dbReference>
<dbReference type="GO" id="GO:0019838">
    <property type="term" value="F:growth factor binding"/>
    <property type="evidence" value="ECO:0007669"/>
    <property type="project" value="UniProtKB-KW"/>
</dbReference>
<dbReference type="GO" id="GO:0008201">
    <property type="term" value="F:heparin binding"/>
    <property type="evidence" value="ECO:0000318"/>
    <property type="project" value="GO_Central"/>
</dbReference>
<dbReference type="GO" id="GO:0005178">
    <property type="term" value="F:integrin binding"/>
    <property type="evidence" value="ECO:0000318"/>
    <property type="project" value="GO_Central"/>
</dbReference>
<dbReference type="GO" id="GO:0003278">
    <property type="term" value="P:apoptotic process involved in heart morphogenesis"/>
    <property type="evidence" value="ECO:0007669"/>
    <property type="project" value="Ensembl"/>
</dbReference>
<dbReference type="GO" id="GO:0060413">
    <property type="term" value="P:atrial septum morphogenesis"/>
    <property type="evidence" value="ECO:0007669"/>
    <property type="project" value="Ensembl"/>
</dbReference>
<dbReference type="GO" id="GO:0003181">
    <property type="term" value="P:atrioventricular valve morphogenesis"/>
    <property type="evidence" value="ECO:0007669"/>
    <property type="project" value="Ensembl"/>
</dbReference>
<dbReference type="GO" id="GO:0007155">
    <property type="term" value="P:cell adhesion"/>
    <property type="evidence" value="ECO:0000318"/>
    <property type="project" value="GO_Central"/>
</dbReference>
<dbReference type="GO" id="GO:0098609">
    <property type="term" value="P:cell-cell adhesion"/>
    <property type="evidence" value="ECO:0007669"/>
    <property type="project" value="Ensembl"/>
</dbReference>
<dbReference type="GO" id="GO:0060591">
    <property type="term" value="P:chondroblast differentiation"/>
    <property type="evidence" value="ECO:0007669"/>
    <property type="project" value="Ensembl"/>
</dbReference>
<dbReference type="GO" id="GO:0030198">
    <property type="term" value="P:extracellular matrix organization"/>
    <property type="evidence" value="ECO:0007669"/>
    <property type="project" value="Ensembl"/>
</dbReference>
<dbReference type="GO" id="GO:0007229">
    <property type="term" value="P:integrin-mediated signaling pathway"/>
    <property type="evidence" value="ECO:0007669"/>
    <property type="project" value="Ensembl"/>
</dbReference>
<dbReference type="GO" id="GO:0002041">
    <property type="term" value="P:intussusceptive angiogenesis"/>
    <property type="evidence" value="ECO:0007669"/>
    <property type="project" value="Ensembl"/>
</dbReference>
<dbReference type="GO" id="GO:0043066">
    <property type="term" value="P:negative regulation of apoptotic process"/>
    <property type="evidence" value="ECO:0007669"/>
    <property type="project" value="Ensembl"/>
</dbReference>
<dbReference type="GO" id="GO:0001649">
    <property type="term" value="P:osteoblast differentiation"/>
    <property type="evidence" value="ECO:0007669"/>
    <property type="project" value="Ensembl"/>
</dbReference>
<dbReference type="GO" id="GO:0043065">
    <property type="term" value="P:positive regulation of apoptotic process"/>
    <property type="evidence" value="ECO:0007669"/>
    <property type="project" value="Ensembl"/>
</dbReference>
<dbReference type="GO" id="GO:0030513">
    <property type="term" value="P:positive regulation of BMP signaling pathway"/>
    <property type="evidence" value="ECO:0007669"/>
    <property type="project" value="Ensembl"/>
</dbReference>
<dbReference type="GO" id="GO:0030501">
    <property type="term" value="P:positive regulation of bone mineralization"/>
    <property type="evidence" value="ECO:0007669"/>
    <property type="project" value="Ensembl"/>
</dbReference>
<dbReference type="GO" id="GO:0061036">
    <property type="term" value="P:positive regulation of cartilage development"/>
    <property type="evidence" value="ECO:0007669"/>
    <property type="project" value="Ensembl"/>
</dbReference>
<dbReference type="GO" id="GO:0045597">
    <property type="term" value="P:positive regulation of cell differentiation"/>
    <property type="evidence" value="ECO:0000318"/>
    <property type="project" value="GO_Central"/>
</dbReference>
<dbReference type="GO" id="GO:0030335">
    <property type="term" value="P:positive regulation of cell migration"/>
    <property type="evidence" value="ECO:0000318"/>
    <property type="project" value="GO_Central"/>
</dbReference>
<dbReference type="GO" id="GO:0010811">
    <property type="term" value="P:positive regulation of cell-substrate adhesion"/>
    <property type="evidence" value="ECO:0007669"/>
    <property type="project" value="Ensembl"/>
</dbReference>
<dbReference type="GO" id="GO:2000304">
    <property type="term" value="P:positive regulation of ceramide biosynthetic process"/>
    <property type="evidence" value="ECO:0007669"/>
    <property type="project" value="Ensembl"/>
</dbReference>
<dbReference type="GO" id="GO:0045669">
    <property type="term" value="P:positive regulation of osteoblast differentiation"/>
    <property type="evidence" value="ECO:0007669"/>
    <property type="project" value="Ensembl"/>
</dbReference>
<dbReference type="GO" id="GO:0033690">
    <property type="term" value="P:positive regulation of osteoblast proliferation"/>
    <property type="evidence" value="ECO:0007669"/>
    <property type="project" value="Ensembl"/>
</dbReference>
<dbReference type="GO" id="GO:0045944">
    <property type="term" value="P:positive regulation of transcription by RNA polymerase II"/>
    <property type="evidence" value="ECO:0007669"/>
    <property type="project" value="Ensembl"/>
</dbReference>
<dbReference type="GO" id="GO:0072593">
    <property type="term" value="P:reactive oxygen species metabolic process"/>
    <property type="evidence" value="ECO:0007669"/>
    <property type="project" value="Ensembl"/>
</dbReference>
<dbReference type="GO" id="GO:0070372">
    <property type="term" value="P:regulation of ERK1 and ERK2 cascade"/>
    <property type="evidence" value="ECO:0007669"/>
    <property type="project" value="Ensembl"/>
</dbReference>
<dbReference type="GO" id="GO:0007165">
    <property type="term" value="P:signal transduction"/>
    <property type="evidence" value="ECO:0000318"/>
    <property type="project" value="GO_Central"/>
</dbReference>
<dbReference type="GO" id="GO:0003281">
    <property type="term" value="P:ventricular septum development"/>
    <property type="evidence" value="ECO:0007669"/>
    <property type="project" value="Ensembl"/>
</dbReference>
<dbReference type="FunFam" id="2.10.70.10:FF:000015">
    <property type="entry name" value="CYR61 isoform 1"/>
    <property type="match status" value="1"/>
</dbReference>
<dbReference type="FunFam" id="2.20.100.10:FF:000038">
    <property type="entry name" value="CYR61 isoform 1"/>
    <property type="match status" value="1"/>
</dbReference>
<dbReference type="Gene3D" id="2.10.70.10">
    <property type="entry name" value="Complement Module, domain 1"/>
    <property type="match status" value="1"/>
</dbReference>
<dbReference type="Gene3D" id="2.20.100.10">
    <property type="entry name" value="Thrombospondin type-1 (TSP1) repeat"/>
    <property type="match status" value="1"/>
</dbReference>
<dbReference type="InterPro" id="IPR050941">
    <property type="entry name" value="CCN"/>
</dbReference>
<dbReference type="InterPro" id="IPR006207">
    <property type="entry name" value="Cys_knot_C"/>
</dbReference>
<dbReference type="InterPro" id="IPR006208">
    <property type="entry name" value="Glyco_hormone_CN"/>
</dbReference>
<dbReference type="InterPro" id="IPR009030">
    <property type="entry name" value="Growth_fac_rcpt_cys_sf"/>
</dbReference>
<dbReference type="InterPro" id="IPR000867">
    <property type="entry name" value="IGFBP-like"/>
</dbReference>
<dbReference type="InterPro" id="IPR012395">
    <property type="entry name" value="IGFBP_CNN"/>
</dbReference>
<dbReference type="InterPro" id="IPR017891">
    <property type="entry name" value="Insulin_GF-bd_Cys-rich_CS"/>
</dbReference>
<dbReference type="InterPro" id="IPR043973">
    <property type="entry name" value="TSP1_CCN"/>
</dbReference>
<dbReference type="InterPro" id="IPR000884">
    <property type="entry name" value="TSP1_rpt"/>
</dbReference>
<dbReference type="InterPro" id="IPR036383">
    <property type="entry name" value="TSP1_rpt_sf"/>
</dbReference>
<dbReference type="InterPro" id="IPR001007">
    <property type="entry name" value="VWF_dom"/>
</dbReference>
<dbReference type="PANTHER" id="PTHR11348:SF18">
    <property type="entry name" value="CCN FAMILY MEMBER 1"/>
    <property type="match status" value="1"/>
</dbReference>
<dbReference type="PANTHER" id="PTHR11348">
    <property type="entry name" value="CONNECTIVE TISSUE GROWTH FACTOR-RELATED"/>
    <property type="match status" value="1"/>
</dbReference>
<dbReference type="Pfam" id="PF00007">
    <property type="entry name" value="Cys_knot"/>
    <property type="match status" value="1"/>
</dbReference>
<dbReference type="Pfam" id="PF00219">
    <property type="entry name" value="IGFBP"/>
    <property type="match status" value="1"/>
</dbReference>
<dbReference type="Pfam" id="PF19035">
    <property type="entry name" value="TSP1_CCN"/>
    <property type="match status" value="1"/>
</dbReference>
<dbReference type="Pfam" id="PF00093">
    <property type="entry name" value="VWC"/>
    <property type="match status" value="1"/>
</dbReference>
<dbReference type="PIRSF" id="PIRSF036495">
    <property type="entry name" value="IGFBP_rP_CNN"/>
    <property type="match status" value="1"/>
</dbReference>
<dbReference type="SMART" id="SM00041">
    <property type="entry name" value="CT"/>
    <property type="match status" value="1"/>
</dbReference>
<dbReference type="SMART" id="SM00121">
    <property type="entry name" value="IB"/>
    <property type="match status" value="1"/>
</dbReference>
<dbReference type="SMART" id="SM00209">
    <property type="entry name" value="TSP1"/>
    <property type="match status" value="1"/>
</dbReference>
<dbReference type="SMART" id="SM00214">
    <property type="entry name" value="VWC"/>
    <property type="match status" value="1"/>
</dbReference>
<dbReference type="SUPFAM" id="SSF57603">
    <property type="entry name" value="FnI-like domain"/>
    <property type="match status" value="1"/>
</dbReference>
<dbReference type="SUPFAM" id="SSF57184">
    <property type="entry name" value="Growth factor receptor domain"/>
    <property type="match status" value="1"/>
</dbReference>
<dbReference type="SUPFAM" id="SSF82895">
    <property type="entry name" value="TSP-1 type 1 repeat"/>
    <property type="match status" value="1"/>
</dbReference>
<dbReference type="PROSITE" id="PS01185">
    <property type="entry name" value="CTCK_1"/>
    <property type="match status" value="1"/>
</dbReference>
<dbReference type="PROSITE" id="PS01225">
    <property type="entry name" value="CTCK_2"/>
    <property type="match status" value="1"/>
</dbReference>
<dbReference type="PROSITE" id="PS00222">
    <property type="entry name" value="IGFBP_N_1"/>
    <property type="match status" value="1"/>
</dbReference>
<dbReference type="PROSITE" id="PS51323">
    <property type="entry name" value="IGFBP_N_2"/>
    <property type="match status" value="1"/>
</dbReference>
<dbReference type="PROSITE" id="PS50092">
    <property type="entry name" value="TSP1"/>
    <property type="match status" value="1"/>
</dbReference>
<dbReference type="PROSITE" id="PS01208">
    <property type="entry name" value="VWFC_1"/>
    <property type="match status" value="1"/>
</dbReference>
<dbReference type="PROSITE" id="PS50184">
    <property type="entry name" value="VWFC_2"/>
    <property type="match status" value="1"/>
</dbReference>
<accession>P19336</accession>
<organism>
    <name type="scientific">Gallus gallus</name>
    <name type="common">Chicken</name>
    <dbReference type="NCBI Taxonomy" id="9031"/>
    <lineage>
        <taxon>Eukaryota</taxon>
        <taxon>Metazoa</taxon>
        <taxon>Chordata</taxon>
        <taxon>Craniata</taxon>
        <taxon>Vertebrata</taxon>
        <taxon>Euteleostomi</taxon>
        <taxon>Archelosauria</taxon>
        <taxon>Archosauria</taxon>
        <taxon>Dinosauria</taxon>
        <taxon>Saurischia</taxon>
        <taxon>Theropoda</taxon>
        <taxon>Coelurosauria</taxon>
        <taxon>Aves</taxon>
        <taxon>Neognathae</taxon>
        <taxon>Galloanserae</taxon>
        <taxon>Galliformes</taxon>
        <taxon>Phasianidae</taxon>
        <taxon>Phasianinae</taxon>
        <taxon>Gallus</taxon>
    </lineage>
</organism>
<sequence>MGSAGARPALAAALLCLARLALGSPCPAVCQCPAAAPQCAPGVGLVPDGCGCCKVCAKQLNEDCSRTQPCDHTKGLECNFGASPAATNGICRAQSEGRPCEYNSKIYQNGESFQPNCKHQCTCIDGAVGCIPLCPQELSLPNLGCPSPRLVKVPGQCCEEWVCDESKDALEELEGFFSKEFGLDASEGELTRNNELIAIVKGGLKMLPVFGSEPQSRAFENPKCIVQTTSWSQCSKTCGTGISTRVTNDNPDCKLIKETRICEVRPCGQPSYASLKKGKKCTKTKKSPSPVRFTYAGCSSVKKYRPKYCGSCVDGRCCTPQQTRTVKIRFRCDDGETFTKSVMMIQSCRCNYNCPHANEAYPFYRLVNDIHKFRD</sequence>
<proteinExistence type="evidence at transcript level"/>
<evidence type="ECO:0000250" key="1"/>
<evidence type="ECO:0000250" key="2">
    <source>
        <dbReference type="UniProtKB" id="P18406"/>
    </source>
</evidence>
<evidence type="ECO:0000255" key="3">
    <source>
        <dbReference type="PROSITE-ProRule" id="PRU00039"/>
    </source>
</evidence>
<evidence type="ECO:0000255" key="4">
    <source>
        <dbReference type="PROSITE-ProRule" id="PRU00210"/>
    </source>
</evidence>
<evidence type="ECO:0000255" key="5">
    <source>
        <dbReference type="PROSITE-ProRule" id="PRU00220"/>
    </source>
</evidence>
<evidence type="ECO:0000255" key="6">
    <source>
        <dbReference type="PROSITE-ProRule" id="PRU00653"/>
    </source>
</evidence>
<evidence type="ECO:0000305" key="7"/>
<feature type="signal peptide">
    <location>
        <begin position="1"/>
        <end position="22"/>
    </location>
</feature>
<feature type="chain" id="PRO_0000014397" description="CCN family member 1">
    <location>
        <begin position="23"/>
        <end position="375"/>
    </location>
</feature>
<feature type="domain" description="IGFBP N-terminal" evidence="6">
    <location>
        <begin position="23"/>
        <end position="94"/>
    </location>
</feature>
<feature type="domain" description="VWFC" evidence="5">
    <location>
        <begin position="98"/>
        <end position="164"/>
    </location>
</feature>
<feature type="domain" description="TSP type-1" evidence="4">
    <location>
        <begin position="223"/>
        <end position="268"/>
    </location>
</feature>
<feature type="domain" description="CTCK" evidence="3">
    <location>
        <begin position="281"/>
        <end position="355"/>
    </location>
</feature>
<feature type="region of interest" description="Heparin-binding" evidence="2">
    <location>
        <begin position="274"/>
        <end position="310"/>
    </location>
</feature>
<feature type="disulfide bond" evidence="6">
    <location>
        <begin position="26"/>
        <end position="50"/>
    </location>
</feature>
<feature type="disulfide bond" evidence="6">
    <location>
        <begin position="30"/>
        <end position="52"/>
    </location>
</feature>
<feature type="disulfide bond" evidence="6">
    <location>
        <begin position="32"/>
        <end position="53"/>
    </location>
</feature>
<feature type="disulfide bond" evidence="6">
    <location>
        <begin position="39"/>
        <end position="56"/>
    </location>
</feature>
<feature type="disulfide bond" evidence="6">
    <location>
        <begin position="64"/>
        <end position="78"/>
    </location>
</feature>
<feature type="disulfide bond" evidence="6">
    <location>
        <begin position="70"/>
        <end position="91"/>
    </location>
</feature>
<feature type="disulfide bond" evidence="1">
    <location>
        <begin position="281"/>
        <end position="318"/>
    </location>
</feature>
<feature type="disulfide bond" evidence="1">
    <location>
        <begin position="298"/>
        <end position="332"/>
    </location>
</feature>
<feature type="disulfide bond" evidence="1">
    <location>
        <begin position="309"/>
        <end position="348"/>
    </location>
</feature>
<feature type="disulfide bond" evidence="1">
    <location>
        <begin position="312"/>
        <end position="350"/>
    </location>
</feature>
<feature type="disulfide bond" evidence="1">
    <location>
        <begin position="317"/>
        <end position="354"/>
    </location>
</feature>
<protein>
    <recommendedName>
        <fullName>CCN family member 1</fullName>
    </recommendedName>
    <alternativeName>
        <fullName>Cellular communication network factor 1</fullName>
    </alternativeName>
    <alternativeName>
        <fullName>Protein CEF-10</fullName>
    </alternativeName>
    <alternativeName>
        <fullName>Protein CYR61</fullName>
    </alternativeName>
</protein>
<reference key="1">
    <citation type="journal article" date="1989" name="Proc. Natl. Acad. Sci. U.S.A.">
        <title>Identification of a phorbol ester-repressible v-src-inducible gene.</title>
        <authorList>
            <person name="Simmons D.L."/>
            <person name="Levy D.B."/>
            <person name="Yannoni Y."/>
            <person name="Erikson R.L."/>
        </authorList>
    </citation>
    <scope>NUCLEOTIDE SEQUENCE [MRNA]</scope>
</reference>
<keyword id="KW-1015">Disulfide bond</keyword>
<keyword id="KW-0340">Growth factor binding</keyword>
<keyword id="KW-0597">Phosphoprotein</keyword>
<keyword id="KW-1185">Reference proteome</keyword>
<keyword id="KW-0964">Secreted</keyword>
<keyword id="KW-0732">Signal</keyword>
<name>CCN1_CHICK</name>
<gene>
    <name type="primary">CCN1</name>
    <name type="synonym">CYR61</name>
</gene>
<comment type="function">
    <text>Probable secreted regulatory protein.</text>
</comment>
<comment type="subcellular location">
    <subcellularLocation>
        <location evidence="7">Secreted</location>
    </subcellularLocation>
</comment>
<comment type="induction">
    <text>By V-Src.</text>
</comment>
<comment type="similarity">
    <text evidence="7">Belongs to the CCN family.</text>
</comment>